<proteinExistence type="inferred from homology"/>
<dbReference type="EMBL" id="CP000888">
    <property type="protein sequence ID" value="ACD73972.1"/>
    <property type="molecule type" value="Genomic_DNA"/>
</dbReference>
<dbReference type="RefSeq" id="WP_002965908.1">
    <property type="nucleotide sequence ID" value="NC_010740.1"/>
</dbReference>
<dbReference type="KEGG" id="bmc:BAbS19_II04750"/>
<dbReference type="HOGENOM" id="CLU_095992_0_0_5"/>
<dbReference type="Proteomes" id="UP000002565">
    <property type="component" value="Chromosome 2"/>
</dbReference>
<dbReference type="GO" id="GO:0005886">
    <property type="term" value="C:plasma membrane"/>
    <property type="evidence" value="ECO:0007669"/>
    <property type="project" value="UniProtKB-SubCell"/>
</dbReference>
<dbReference type="GO" id="GO:0030246">
    <property type="term" value="F:carbohydrate binding"/>
    <property type="evidence" value="ECO:0007669"/>
    <property type="project" value="UniProtKB-KW"/>
</dbReference>
<dbReference type="InterPro" id="IPR012413">
    <property type="entry name" value="BA14K"/>
</dbReference>
<dbReference type="Pfam" id="PF07886">
    <property type="entry name" value="BA14K"/>
    <property type="match status" value="1"/>
</dbReference>
<organism>
    <name type="scientific">Brucella abortus (strain S19)</name>
    <dbReference type="NCBI Taxonomy" id="430066"/>
    <lineage>
        <taxon>Bacteria</taxon>
        <taxon>Pseudomonadati</taxon>
        <taxon>Pseudomonadota</taxon>
        <taxon>Alphaproteobacteria</taxon>
        <taxon>Hyphomicrobiales</taxon>
        <taxon>Brucellaceae</taxon>
        <taxon>Brucella/Ochrobactrum group</taxon>
        <taxon>Brucella</taxon>
    </lineage>
</organism>
<accession>B2SAT5</accession>
<reference key="1">
    <citation type="journal article" date="2008" name="PLoS ONE">
        <title>Genome sequence of Brucella abortus vaccine strain S19 compared to virulent strains yields candidate virulence genes.</title>
        <authorList>
            <person name="Crasta O.R."/>
            <person name="Folkerts O."/>
            <person name="Fei Z."/>
            <person name="Mane S.P."/>
            <person name="Evans C."/>
            <person name="Martino-Catt S."/>
            <person name="Bricker B."/>
            <person name="Yu G."/>
            <person name="Du L."/>
            <person name="Sobral B.W."/>
        </authorList>
    </citation>
    <scope>NUCLEOTIDE SEQUENCE [LARGE SCALE GENOMIC DNA]</scope>
    <source>
        <strain>S19</strain>
    </source>
</reference>
<sequence>MNSFRKTCAGALALIFGATSIVPTVAAPMNMDRPAINQNVIQARAHYRPQNYNRGHRPGYWHGHRGYRHYRHGYRRHNDGWWYPLAAFGAGAIIGGAISQPRPVYRAPAGSPHVQWCYSRYKSYRASDNTFQPYNGPRKQCRSPYSR</sequence>
<comment type="function">
    <text evidence="1">Has immunoglobulin-binding and hemagglutination properties, and can bind to mannose. Essential for virulence. May be involved in LPS biosynthesis or polysaccharide transport (By similarity).</text>
</comment>
<comment type="subcellular location">
    <subcellularLocation>
        <location evidence="3">Cell membrane</location>
        <topology evidence="3">Single-pass membrane protein</topology>
    </subcellularLocation>
</comment>
<comment type="similarity">
    <text evidence="3">Belongs to the BA14k family.</text>
</comment>
<protein>
    <recommendedName>
        <fullName>Lectin-like protein BA14k</fullName>
    </recommendedName>
</protein>
<feature type="signal peptide" evidence="2">
    <location>
        <begin position="1"/>
        <end position="26"/>
    </location>
</feature>
<feature type="chain" id="PRO_0000361295" description="Lectin-like protein BA14k">
    <location>
        <begin position="27"/>
        <end position="147"/>
    </location>
</feature>
<feature type="transmembrane region" description="Helical" evidence="2">
    <location>
        <begin position="80"/>
        <end position="100"/>
    </location>
</feature>
<evidence type="ECO:0000250" key="1"/>
<evidence type="ECO:0000255" key="2"/>
<evidence type="ECO:0000305" key="3"/>
<gene>
    <name type="ordered locus">BAbS19_II04750</name>
</gene>
<name>14KL_BRUA1</name>
<keyword id="KW-1003">Cell membrane</keyword>
<keyword id="KW-0430">Lectin</keyword>
<keyword id="KW-0472">Membrane</keyword>
<keyword id="KW-0732">Signal</keyword>
<keyword id="KW-0812">Transmembrane</keyword>
<keyword id="KW-1133">Transmembrane helix</keyword>
<keyword id="KW-0843">Virulence</keyword>